<keyword id="KW-0460">Magnesium</keyword>
<keyword id="KW-0464">Manganese</keyword>
<keyword id="KW-0474">Menaquinone biosynthesis</keyword>
<keyword id="KW-0479">Metal-binding</keyword>
<keyword id="KW-1185">Reference proteome</keyword>
<keyword id="KW-0786">Thiamine pyrophosphate</keyword>
<keyword id="KW-0808">Transferase</keyword>
<name>MEND_YERPE</name>
<proteinExistence type="inferred from homology"/>
<accession>Q7CJ76</accession>
<accession>Q74T53</accession>
<protein>
    <recommendedName>
        <fullName evidence="1">2-succinyl-5-enolpyruvyl-6-hydroxy-3-cyclohexene-1-carboxylate synthase</fullName>
        <shortName evidence="1">SEPHCHC synthase</shortName>
        <ecNumber evidence="1">2.2.1.9</ecNumber>
    </recommendedName>
    <alternativeName>
        <fullName evidence="1">Menaquinone biosynthesis protein MenD</fullName>
    </alternativeName>
</protein>
<sequence length="567" mass="61777">MSTSVFNRRWAALLLEALTRHGVRHICIAPGSRSTPLTLAAAANPSLVCHTHFDERGLGHLALGLAKASTEPVAVIVTSGTAVANLYPALIEAGLTGERLILLTADRPPELIDCGANQAIRQQGLFASHPTLSVNLPRPTPDISARWLVSTLDSAMAQLQHGALHINCPFAEPLYGGDEQQYADWSASLGDWWQDCHPWLRQTCYPPSLYQPPAQQADWFFWRQKRGVVIAGRMGAQEGRQLTAWAAMLGWPLIGDVLSQTGQPLPCADLWLAHPRAQETLAQAQMVLQFGSSLTSKRLLQWQTACQPQEYWLVDSAPGRLDPANHRGRRIICPVGEWLSRHPAQRRTPWATELAAYSESAQAQVIETLAGQFSEAAVAHQLAELLPDNGQLFVGNSLIVRLIDALGQLPAGYPVYSNRGASGIDGLLSTAAGVQRATAKPTLAIVGDLSALYDLNALALLRQSSAPMVLLVINNNGGQIFSLLPTPEAERQRFYCMPQDVNFEHAAVMFSLGYARPNSWPQLRELAHQCWLRGGTTLIEVQVPPSQGAETLQQLVQQVTLIPQVAP</sequence>
<feature type="chain" id="PRO_0000341890" description="2-succinyl-5-enolpyruvyl-6-hydroxy-3-cyclohexene-1-carboxylate synthase">
    <location>
        <begin position="1"/>
        <end position="567"/>
    </location>
</feature>
<dbReference type="EC" id="2.2.1.9" evidence="1"/>
<dbReference type="EMBL" id="AL590842">
    <property type="protein sequence ID" value="CAL21153.1"/>
    <property type="molecule type" value="Genomic_DNA"/>
</dbReference>
<dbReference type="EMBL" id="AE009952">
    <property type="protein sequence ID" value="AAM85229.1"/>
    <property type="molecule type" value="Genomic_DNA"/>
</dbReference>
<dbReference type="EMBL" id="AE017042">
    <property type="protein sequence ID" value="AAS62544.1"/>
    <property type="molecule type" value="Genomic_DNA"/>
</dbReference>
<dbReference type="PIR" id="AF0308">
    <property type="entry name" value="AF0308"/>
</dbReference>
<dbReference type="RefSeq" id="WP_002210247.1">
    <property type="nucleotide sequence ID" value="NZ_WUCM01000021.1"/>
</dbReference>
<dbReference type="RefSeq" id="YP_002347489.1">
    <property type="nucleotide sequence ID" value="NC_003143.1"/>
</dbReference>
<dbReference type="SMR" id="Q7CJ76"/>
<dbReference type="IntAct" id="Q7CJ76">
    <property type="interactions" value="1"/>
</dbReference>
<dbReference type="STRING" id="214092.YPO2527"/>
<dbReference type="PaxDb" id="214092-YPO2527"/>
<dbReference type="EnsemblBacteria" id="AAS62544">
    <property type="protein sequence ID" value="AAS62544"/>
    <property type="gene ID" value="YP_2338"/>
</dbReference>
<dbReference type="GeneID" id="57976160"/>
<dbReference type="KEGG" id="ype:YPO2527"/>
<dbReference type="KEGG" id="ypk:y1660"/>
<dbReference type="KEGG" id="ypm:YP_2338"/>
<dbReference type="PATRIC" id="fig|214092.21.peg.2945"/>
<dbReference type="eggNOG" id="COG1165">
    <property type="taxonomic scope" value="Bacteria"/>
</dbReference>
<dbReference type="HOGENOM" id="CLU_006051_3_0_6"/>
<dbReference type="OMA" id="YDSNALW"/>
<dbReference type="OrthoDB" id="9791859at2"/>
<dbReference type="UniPathway" id="UPA00079"/>
<dbReference type="UniPathway" id="UPA01057">
    <property type="reaction ID" value="UER00164"/>
</dbReference>
<dbReference type="Proteomes" id="UP000000815">
    <property type="component" value="Chromosome"/>
</dbReference>
<dbReference type="Proteomes" id="UP000001019">
    <property type="component" value="Chromosome"/>
</dbReference>
<dbReference type="Proteomes" id="UP000002490">
    <property type="component" value="Chromosome"/>
</dbReference>
<dbReference type="GO" id="GO:0070204">
    <property type="term" value="F:2-succinyl-5-enolpyruvyl-6-hydroxy-3-cyclohexene-1-carboxylic-acid synthase activity"/>
    <property type="evidence" value="ECO:0007669"/>
    <property type="project" value="UniProtKB-UniRule"/>
</dbReference>
<dbReference type="GO" id="GO:0000287">
    <property type="term" value="F:magnesium ion binding"/>
    <property type="evidence" value="ECO:0007669"/>
    <property type="project" value="UniProtKB-UniRule"/>
</dbReference>
<dbReference type="GO" id="GO:0030145">
    <property type="term" value="F:manganese ion binding"/>
    <property type="evidence" value="ECO:0007669"/>
    <property type="project" value="UniProtKB-UniRule"/>
</dbReference>
<dbReference type="GO" id="GO:0030976">
    <property type="term" value="F:thiamine pyrophosphate binding"/>
    <property type="evidence" value="ECO:0007669"/>
    <property type="project" value="UniProtKB-UniRule"/>
</dbReference>
<dbReference type="GO" id="GO:0009234">
    <property type="term" value="P:menaquinone biosynthetic process"/>
    <property type="evidence" value="ECO:0007669"/>
    <property type="project" value="UniProtKB-UniRule"/>
</dbReference>
<dbReference type="CDD" id="cd07037">
    <property type="entry name" value="TPP_PYR_MenD"/>
    <property type="match status" value="1"/>
</dbReference>
<dbReference type="CDD" id="cd02009">
    <property type="entry name" value="TPP_SHCHC_synthase"/>
    <property type="match status" value="1"/>
</dbReference>
<dbReference type="FunFam" id="3.40.50.970:FF:000029">
    <property type="entry name" value="2-succinyl-5-enolpyruvyl-6-hydroxy-3-cyclohexene-1-carboxylate synthase"/>
    <property type="match status" value="1"/>
</dbReference>
<dbReference type="Gene3D" id="3.40.50.970">
    <property type="match status" value="2"/>
</dbReference>
<dbReference type="Gene3D" id="3.40.50.1220">
    <property type="entry name" value="TPP-binding domain"/>
    <property type="match status" value="1"/>
</dbReference>
<dbReference type="HAMAP" id="MF_01659">
    <property type="entry name" value="MenD"/>
    <property type="match status" value="1"/>
</dbReference>
<dbReference type="InterPro" id="IPR004433">
    <property type="entry name" value="MenaQ_synth_MenD"/>
</dbReference>
<dbReference type="InterPro" id="IPR032264">
    <property type="entry name" value="MenD_middle"/>
</dbReference>
<dbReference type="InterPro" id="IPR029061">
    <property type="entry name" value="THDP-binding"/>
</dbReference>
<dbReference type="InterPro" id="IPR012001">
    <property type="entry name" value="Thiamin_PyroP_enz_TPP-bd_dom"/>
</dbReference>
<dbReference type="InterPro" id="IPR011766">
    <property type="entry name" value="TPP_enzyme_TPP-bd"/>
</dbReference>
<dbReference type="NCBIfam" id="TIGR00173">
    <property type="entry name" value="menD"/>
    <property type="match status" value="1"/>
</dbReference>
<dbReference type="PANTHER" id="PTHR42916">
    <property type="entry name" value="2-SUCCINYL-5-ENOLPYRUVYL-6-HYDROXY-3-CYCLOHEXENE-1-CARBOXYLATE SYNTHASE"/>
    <property type="match status" value="1"/>
</dbReference>
<dbReference type="PANTHER" id="PTHR42916:SF1">
    <property type="entry name" value="PROTEIN PHYLLO, CHLOROPLASTIC"/>
    <property type="match status" value="1"/>
</dbReference>
<dbReference type="Pfam" id="PF02775">
    <property type="entry name" value="TPP_enzyme_C"/>
    <property type="match status" value="1"/>
</dbReference>
<dbReference type="Pfam" id="PF16582">
    <property type="entry name" value="TPP_enzyme_M_2"/>
    <property type="match status" value="1"/>
</dbReference>
<dbReference type="Pfam" id="PF02776">
    <property type="entry name" value="TPP_enzyme_N"/>
    <property type="match status" value="1"/>
</dbReference>
<dbReference type="PIRSF" id="PIRSF004983">
    <property type="entry name" value="MenD"/>
    <property type="match status" value="1"/>
</dbReference>
<dbReference type="SUPFAM" id="SSF52518">
    <property type="entry name" value="Thiamin diphosphate-binding fold (THDP-binding)"/>
    <property type="match status" value="2"/>
</dbReference>
<gene>
    <name evidence="1" type="primary">menD</name>
    <name type="ordered locus">YPO2527</name>
    <name type="ordered locus">y1660</name>
    <name type="ordered locus">YP_2338</name>
</gene>
<organism>
    <name type="scientific">Yersinia pestis</name>
    <dbReference type="NCBI Taxonomy" id="632"/>
    <lineage>
        <taxon>Bacteria</taxon>
        <taxon>Pseudomonadati</taxon>
        <taxon>Pseudomonadota</taxon>
        <taxon>Gammaproteobacteria</taxon>
        <taxon>Enterobacterales</taxon>
        <taxon>Yersiniaceae</taxon>
        <taxon>Yersinia</taxon>
    </lineage>
</organism>
<comment type="function">
    <text evidence="1">Catalyzes the thiamine diphosphate-dependent decarboxylation of 2-oxoglutarate and the subsequent addition of the resulting succinic semialdehyde-thiamine pyrophosphate anion to isochorismate to yield 2-succinyl-5-enolpyruvyl-6-hydroxy-3-cyclohexene-1-carboxylate (SEPHCHC).</text>
</comment>
<comment type="catalytic activity">
    <reaction evidence="1">
        <text>isochorismate + 2-oxoglutarate + H(+) = 5-enolpyruvoyl-6-hydroxy-2-succinyl-cyclohex-3-ene-1-carboxylate + CO2</text>
        <dbReference type="Rhea" id="RHEA:25593"/>
        <dbReference type="ChEBI" id="CHEBI:15378"/>
        <dbReference type="ChEBI" id="CHEBI:16526"/>
        <dbReference type="ChEBI" id="CHEBI:16810"/>
        <dbReference type="ChEBI" id="CHEBI:29780"/>
        <dbReference type="ChEBI" id="CHEBI:58818"/>
        <dbReference type="EC" id="2.2.1.9"/>
    </reaction>
</comment>
<comment type="cofactor">
    <cofactor evidence="1">
        <name>Mg(2+)</name>
        <dbReference type="ChEBI" id="CHEBI:18420"/>
    </cofactor>
    <cofactor evidence="1">
        <name>Mn(2+)</name>
        <dbReference type="ChEBI" id="CHEBI:29035"/>
    </cofactor>
</comment>
<comment type="cofactor">
    <cofactor evidence="1">
        <name>thiamine diphosphate</name>
        <dbReference type="ChEBI" id="CHEBI:58937"/>
    </cofactor>
    <text evidence="1">Binds 1 thiamine pyrophosphate per subunit.</text>
</comment>
<comment type="pathway">
    <text evidence="1">Quinol/quinone metabolism; 1,4-dihydroxy-2-naphthoate biosynthesis; 1,4-dihydroxy-2-naphthoate from chorismate: step 2/7.</text>
</comment>
<comment type="pathway">
    <text evidence="1">Quinol/quinone metabolism; menaquinone biosynthesis.</text>
</comment>
<comment type="subunit">
    <text evidence="1">Homodimer.</text>
</comment>
<comment type="similarity">
    <text evidence="1">Belongs to the TPP enzyme family. MenD subfamily.</text>
</comment>
<reference key="1">
    <citation type="journal article" date="2001" name="Nature">
        <title>Genome sequence of Yersinia pestis, the causative agent of plague.</title>
        <authorList>
            <person name="Parkhill J."/>
            <person name="Wren B.W."/>
            <person name="Thomson N.R."/>
            <person name="Titball R.W."/>
            <person name="Holden M.T.G."/>
            <person name="Prentice M.B."/>
            <person name="Sebaihia M."/>
            <person name="James K.D."/>
            <person name="Churcher C.M."/>
            <person name="Mungall K.L."/>
            <person name="Baker S."/>
            <person name="Basham D."/>
            <person name="Bentley S.D."/>
            <person name="Brooks K."/>
            <person name="Cerdeno-Tarraga A.-M."/>
            <person name="Chillingworth T."/>
            <person name="Cronin A."/>
            <person name="Davies R.M."/>
            <person name="Davis P."/>
            <person name="Dougan G."/>
            <person name="Feltwell T."/>
            <person name="Hamlin N."/>
            <person name="Holroyd S."/>
            <person name="Jagels K."/>
            <person name="Karlyshev A.V."/>
            <person name="Leather S."/>
            <person name="Moule S."/>
            <person name="Oyston P.C.F."/>
            <person name="Quail M.A."/>
            <person name="Rutherford K.M."/>
            <person name="Simmonds M."/>
            <person name="Skelton J."/>
            <person name="Stevens K."/>
            <person name="Whitehead S."/>
            <person name="Barrell B.G."/>
        </authorList>
    </citation>
    <scope>NUCLEOTIDE SEQUENCE [LARGE SCALE GENOMIC DNA]</scope>
    <source>
        <strain>CO-92 / Biovar Orientalis</strain>
    </source>
</reference>
<reference key="2">
    <citation type="journal article" date="2002" name="J. Bacteriol.">
        <title>Genome sequence of Yersinia pestis KIM.</title>
        <authorList>
            <person name="Deng W."/>
            <person name="Burland V."/>
            <person name="Plunkett G. III"/>
            <person name="Boutin A."/>
            <person name="Mayhew G.F."/>
            <person name="Liss P."/>
            <person name="Perna N.T."/>
            <person name="Rose D.J."/>
            <person name="Mau B."/>
            <person name="Zhou S."/>
            <person name="Schwartz D.C."/>
            <person name="Fetherston J.D."/>
            <person name="Lindler L.E."/>
            <person name="Brubaker R.R."/>
            <person name="Plano G.V."/>
            <person name="Straley S.C."/>
            <person name="McDonough K.A."/>
            <person name="Nilles M.L."/>
            <person name="Matson J.S."/>
            <person name="Blattner F.R."/>
            <person name="Perry R.D."/>
        </authorList>
    </citation>
    <scope>NUCLEOTIDE SEQUENCE [LARGE SCALE GENOMIC DNA]</scope>
    <source>
        <strain>KIM10+ / Biovar Mediaevalis</strain>
    </source>
</reference>
<reference key="3">
    <citation type="journal article" date="2004" name="DNA Res.">
        <title>Complete genome sequence of Yersinia pestis strain 91001, an isolate avirulent to humans.</title>
        <authorList>
            <person name="Song Y."/>
            <person name="Tong Z."/>
            <person name="Wang J."/>
            <person name="Wang L."/>
            <person name="Guo Z."/>
            <person name="Han Y."/>
            <person name="Zhang J."/>
            <person name="Pei D."/>
            <person name="Zhou D."/>
            <person name="Qin H."/>
            <person name="Pang X."/>
            <person name="Han Y."/>
            <person name="Zhai J."/>
            <person name="Li M."/>
            <person name="Cui B."/>
            <person name="Qi Z."/>
            <person name="Jin L."/>
            <person name="Dai R."/>
            <person name="Chen F."/>
            <person name="Li S."/>
            <person name="Ye C."/>
            <person name="Du Z."/>
            <person name="Lin W."/>
            <person name="Wang J."/>
            <person name="Yu J."/>
            <person name="Yang H."/>
            <person name="Wang J."/>
            <person name="Huang P."/>
            <person name="Yang R."/>
        </authorList>
    </citation>
    <scope>NUCLEOTIDE SEQUENCE [LARGE SCALE GENOMIC DNA]</scope>
    <source>
        <strain>91001 / Biovar Mediaevalis</strain>
    </source>
</reference>
<evidence type="ECO:0000255" key="1">
    <source>
        <dbReference type="HAMAP-Rule" id="MF_01659"/>
    </source>
</evidence>